<name>UBIX_ARCFU</name>
<sequence length="182" mass="19968">MRFVVALTGASGQILGIRLIEKLTELGAEVYAVASRAAKITLKAETDYDEGYVREIATKYYDEDEIAAPFASGSFRHDGMAVVPCSIKTASSIAYGIADNLIARAADVTLKEKRRLVLAIREAPLHSGHLKTLARLAEMGAVIFPPVLSFYTRPKSVDDLIEHTVSRIAEQLGVEVDYRRWG</sequence>
<accession>O29054</accession>
<reference key="1">
    <citation type="journal article" date="1997" name="Nature">
        <title>The complete genome sequence of the hyperthermophilic, sulphate-reducing archaeon Archaeoglobus fulgidus.</title>
        <authorList>
            <person name="Klenk H.-P."/>
            <person name="Clayton R.A."/>
            <person name="Tomb J.-F."/>
            <person name="White O."/>
            <person name="Nelson K.E."/>
            <person name="Ketchum K.A."/>
            <person name="Dodson R.J."/>
            <person name="Gwinn M.L."/>
            <person name="Hickey E.K."/>
            <person name="Peterson J.D."/>
            <person name="Richardson D.L."/>
            <person name="Kerlavage A.R."/>
            <person name="Graham D.E."/>
            <person name="Kyrpides N.C."/>
            <person name="Fleischmann R.D."/>
            <person name="Quackenbush J."/>
            <person name="Lee N.H."/>
            <person name="Sutton G.G."/>
            <person name="Gill S.R."/>
            <person name="Kirkness E.F."/>
            <person name="Dougherty B.A."/>
            <person name="McKenney K."/>
            <person name="Adams M.D."/>
            <person name="Loftus B.J."/>
            <person name="Peterson S.N."/>
            <person name="Reich C.I."/>
            <person name="McNeil L.K."/>
            <person name="Badger J.H."/>
            <person name="Glodek A."/>
            <person name="Zhou L."/>
            <person name="Overbeek R."/>
            <person name="Gocayne J.D."/>
            <person name="Weidman J.F."/>
            <person name="McDonald L.A."/>
            <person name="Utterback T.R."/>
            <person name="Cotton M.D."/>
            <person name="Spriggs T."/>
            <person name="Artiach P."/>
            <person name="Kaine B.P."/>
            <person name="Sykes S.M."/>
            <person name="Sadow P.W."/>
            <person name="D'Andrea K.P."/>
            <person name="Bowman C."/>
            <person name="Fujii C."/>
            <person name="Garland S.A."/>
            <person name="Mason T.M."/>
            <person name="Olsen G.J."/>
            <person name="Fraser C.M."/>
            <person name="Smith H.O."/>
            <person name="Woese C.R."/>
            <person name="Venter J.C."/>
        </authorList>
    </citation>
    <scope>NUCLEOTIDE SEQUENCE [LARGE SCALE GENOMIC DNA]</scope>
    <source>
        <strain>ATCC 49558 / DSM 4304 / JCM 9628 / NBRC 100126 / VC-16</strain>
    </source>
</reference>
<evidence type="ECO:0000255" key="1">
    <source>
        <dbReference type="HAMAP-Rule" id="MF_01984"/>
    </source>
</evidence>
<evidence type="ECO:0007829" key="2">
    <source>
        <dbReference type="PDB" id="6M8T"/>
    </source>
</evidence>
<proteinExistence type="evidence at protein level"/>
<comment type="function">
    <text evidence="1">Flavin prenyltransferase that catalyzes the synthesis of the prenylated FMN cofactor (prenyl-FMN) for 4-hydroxy-3-polyprenylbenzoic acid decarboxylase UbiD. The prenyltransferase is metal-independent and links a dimethylallyl moiety from dimethylallyl monophosphate (DMAP) to the flavin N5 and C6 atoms of FMN.</text>
</comment>
<comment type="catalytic activity">
    <reaction evidence="1">
        <text>dimethylallyl phosphate + FMNH2 = prenylated FMNH2 + phosphate</text>
        <dbReference type="Rhea" id="RHEA:37743"/>
        <dbReference type="ChEBI" id="CHEBI:43474"/>
        <dbReference type="ChEBI" id="CHEBI:57618"/>
        <dbReference type="ChEBI" id="CHEBI:87467"/>
        <dbReference type="ChEBI" id="CHEBI:88052"/>
        <dbReference type="EC" id="2.5.1.129"/>
    </reaction>
</comment>
<comment type="similarity">
    <text evidence="1">Belongs to the UbiX/PAD1 family.</text>
</comment>
<gene>
    <name evidence="1" type="primary">ubiX</name>
    <name type="ordered locus">AF_1214</name>
</gene>
<keyword id="KW-0002">3D-structure</keyword>
<keyword id="KW-0285">Flavoprotein</keyword>
<keyword id="KW-0288">FMN</keyword>
<keyword id="KW-0637">Prenyltransferase</keyword>
<keyword id="KW-1185">Reference proteome</keyword>
<keyword id="KW-0808">Transferase</keyword>
<protein>
    <recommendedName>
        <fullName evidence="1">Flavin prenyltransferase UbiX</fullName>
        <ecNumber evidence="1">2.5.1.129</ecNumber>
    </recommendedName>
</protein>
<feature type="chain" id="PRO_0000134977" description="Flavin prenyltransferase UbiX">
    <location>
        <begin position="1"/>
        <end position="182"/>
    </location>
</feature>
<feature type="binding site" evidence="1">
    <location>
        <begin position="9"/>
        <end position="11"/>
    </location>
    <ligand>
        <name>FMN</name>
        <dbReference type="ChEBI" id="CHEBI:58210"/>
    </ligand>
</feature>
<feature type="binding site" evidence="1">
    <location>
        <position position="35"/>
    </location>
    <ligand>
        <name>FMN</name>
        <dbReference type="ChEBI" id="CHEBI:58210"/>
    </ligand>
</feature>
<feature type="binding site" evidence="1">
    <location>
        <begin position="86"/>
        <end position="89"/>
    </location>
    <ligand>
        <name>FMN</name>
        <dbReference type="ChEBI" id="CHEBI:58210"/>
    </ligand>
</feature>
<feature type="binding site" evidence="1">
    <location>
        <position position="121"/>
    </location>
    <ligand>
        <name>FMN</name>
        <dbReference type="ChEBI" id="CHEBI:58210"/>
    </ligand>
</feature>
<feature type="binding site" evidence="1">
    <location>
        <position position="151"/>
    </location>
    <ligand>
        <name>dimethylallyl phosphate</name>
        <dbReference type="ChEBI" id="CHEBI:88052"/>
    </ligand>
</feature>
<feature type="binding site" evidence="1">
    <location>
        <position position="167"/>
    </location>
    <ligand>
        <name>dimethylallyl phosphate</name>
        <dbReference type="ChEBI" id="CHEBI:88052"/>
    </ligand>
</feature>
<feature type="strand" evidence="2">
    <location>
        <begin position="2"/>
        <end position="7"/>
    </location>
</feature>
<feature type="strand" evidence="2">
    <location>
        <begin position="9"/>
        <end position="11"/>
    </location>
</feature>
<feature type="helix" evidence="2">
    <location>
        <begin position="13"/>
        <end position="25"/>
    </location>
</feature>
<feature type="strand" evidence="2">
    <location>
        <begin position="29"/>
        <end position="34"/>
    </location>
</feature>
<feature type="helix" evidence="2">
    <location>
        <begin position="36"/>
        <end position="45"/>
    </location>
</feature>
<feature type="helix" evidence="2">
    <location>
        <begin position="52"/>
        <end position="56"/>
    </location>
</feature>
<feature type="strand" evidence="2">
    <location>
        <begin position="57"/>
        <end position="62"/>
    </location>
</feature>
<feature type="helix" evidence="2">
    <location>
        <begin position="69"/>
        <end position="71"/>
    </location>
</feature>
<feature type="strand" evidence="2">
    <location>
        <begin position="80"/>
        <end position="85"/>
    </location>
</feature>
<feature type="helix" evidence="2">
    <location>
        <begin position="87"/>
        <end position="95"/>
    </location>
</feature>
<feature type="helix" evidence="2">
    <location>
        <begin position="101"/>
        <end position="111"/>
    </location>
</feature>
<feature type="strand" evidence="2">
    <location>
        <begin position="116"/>
        <end position="120"/>
    </location>
</feature>
<feature type="helix" evidence="2">
    <location>
        <begin position="127"/>
        <end position="138"/>
    </location>
</feature>
<feature type="helix" evidence="2">
    <location>
        <begin position="157"/>
        <end position="171"/>
    </location>
</feature>
<organism>
    <name type="scientific">Archaeoglobus fulgidus (strain ATCC 49558 / DSM 4304 / JCM 9628 / NBRC 100126 / VC-16)</name>
    <dbReference type="NCBI Taxonomy" id="224325"/>
    <lineage>
        <taxon>Archaea</taxon>
        <taxon>Methanobacteriati</taxon>
        <taxon>Methanobacteriota</taxon>
        <taxon>Archaeoglobi</taxon>
        <taxon>Archaeoglobales</taxon>
        <taxon>Archaeoglobaceae</taxon>
        <taxon>Archaeoglobus</taxon>
    </lineage>
</organism>
<dbReference type="EC" id="2.5.1.129" evidence="1"/>
<dbReference type="EMBL" id="AE000782">
    <property type="protein sequence ID" value="AAB90031.1"/>
    <property type="molecule type" value="Genomic_DNA"/>
</dbReference>
<dbReference type="PIR" id="E69401">
    <property type="entry name" value="E69401"/>
</dbReference>
<dbReference type="RefSeq" id="WP_010878709.1">
    <property type="nucleotide sequence ID" value="NC_000917.1"/>
</dbReference>
<dbReference type="PDB" id="6M8T">
    <property type="method" value="X-ray"/>
    <property type="resolution" value="1.67 A"/>
    <property type="chains" value="A=1-182"/>
</dbReference>
<dbReference type="PDB" id="6M8U">
    <property type="method" value="X-ray"/>
    <property type="resolution" value="2.22 A"/>
    <property type="chains" value="A=1-182"/>
</dbReference>
<dbReference type="PDBsum" id="6M8T"/>
<dbReference type="PDBsum" id="6M8U"/>
<dbReference type="SMR" id="O29054"/>
<dbReference type="STRING" id="224325.AF_1214"/>
<dbReference type="PaxDb" id="224325-AF_1214"/>
<dbReference type="EnsemblBacteria" id="AAB90031">
    <property type="protein sequence ID" value="AAB90031"/>
    <property type="gene ID" value="AF_1214"/>
</dbReference>
<dbReference type="KEGG" id="afu:AF_1214"/>
<dbReference type="eggNOG" id="arCOG01703">
    <property type="taxonomic scope" value="Archaea"/>
</dbReference>
<dbReference type="HOGENOM" id="CLU_074522_2_1_2"/>
<dbReference type="OrthoDB" id="9540at2157"/>
<dbReference type="PhylomeDB" id="O29054"/>
<dbReference type="Proteomes" id="UP000002199">
    <property type="component" value="Chromosome"/>
</dbReference>
<dbReference type="GO" id="GO:0016831">
    <property type="term" value="F:carboxy-lyase activity"/>
    <property type="evidence" value="ECO:0007669"/>
    <property type="project" value="TreeGrafter"/>
</dbReference>
<dbReference type="GO" id="GO:0106141">
    <property type="term" value="F:flavin prenyltransferase activity"/>
    <property type="evidence" value="ECO:0007669"/>
    <property type="project" value="UniProtKB-EC"/>
</dbReference>
<dbReference type="Gene3D" id="3.40.50.1950">
    <property type="entry name" value="Flavin prenyltransferase-like"/>
    <property type="match status" value="1"/>
</dbReference>
<dbReference type="HAMAP" id="MF_01984">
    <property type="entry name" value="ubiX_pad"/>
    <property type="match status" value="1"/>
</dbReference>
<dbReference type="InterPro" id="IPR036551">
    <property type="entry name" value="Flavin_trans-like"/>
</dbReference>
<dbReference type="InterPro" id="IPR003382">
    <property type="entry name" value="Flavoprotein"/>
</dbReference>
<dbReference type="InterPro" id="IPR004507">
    <property type="entry name" value="UbiX-like"/>
</dbReference>
<dbReference type="NCBIfam" id="NF004685">
    <property type="entry name" value="PRK06029.1"/>
    <property type="match status" value="1"/>
</dbReference>
<dbReference type="NCBIfam" id="TIGR00421">
    <property type="entry name" value="ubiX_pad"/>
    <property type="match status" value="1"/>
</dbReference>
<dbReference type="PANTHER" id="PTHR43374">
    <property type="entry name" value="FLAVIN PRENYLTRANSFERASE"/>
    <property type="match status" value="1"/>
</dbReference>
<dbReference type="PANTHER" id="PTHR43374:SF1">
    <property type="entry name" value="FLAVIN PRENYLTRANSFERASE PAD1, MITOCHONDRIAL"/>
    <property type="match status" value="1"/>
</dbReference>
<dbReference type="Pfam" id="PF02441">
    <property type="entry name" value="Flavoprotein"/>
    <property type="match status" value="1"/>
</dbReference>
<dbReference type="SUPFAM" id="SSF52507">
    <property type="entry name" value="Homo-oligomeric flavin-containing Cys decarboxylases, HFCD"/>
    <property type="match status" value="1"/>
</dbReference>